<keyword id="KW-0687">Ribonucleoprotein</keyword>
<keyword id="KW-0689">Ribosomal protein</keyword>
<keyword id="KW-0694">RNA-binding</keyword>
<keyword id="KW-0699">rRNA-binding</keyword>
<sequence>MPRSLKKGPFVDAHLFAKVEAAVASNSRKPIKTWSRRSMILPDFVGLTISVHNGRNHVPVIVTEHMVGHKLGEFAPTRTYRGHGVDKKSKR</sequence>
<name>RS19_ACIBC</name>
<organism>
    <name type="scientific">Acinetobacter baumannii (strain ACICU)</name>
    <dbReference type="NCBI Taxonomy" id="405416"/>
    <lineage>
        <taxon>Bacteria</taxon>
        <taxon>Pseudomonadati</taxon>
        <taxon>Pseudomonadota</taxon>
        <taxon>Gammaproteobacteria</taxon>
        <taxon>Moraxellales</taxon>
        <taxon>Moraxellaceae</taxon>
        <taxon>Acinetobacter</taxon>
        <taxon>Acinetobacter calcoaceticus/baumannii complex</taxon>
    </lineage>
</organism>
<gene>
    <name evidence="1" type="primary">rpsS</name>
    <name type="ordered locus">ACICU_03276</name>
</gene>
<proteinExistence type="inferred from homology"/>
<reference key="1">
    <citation type="journal article" date="2008" name="Antimicrob. Agents Chemother.">
        <title>Whole-genome pyrosequencing of an epidemic multidrug-resistant Acinetobacter baumannii strain belonging to the European clone II group.</title>
        <authorList>
            <person name="Iacono M."/>
            <person name="Villa L."/>
            <person name="Fortini D."/>
            <person name="Bordoni R."/>
            <person name="Imperi F."/>
            <person name="Bonnal R.J."/>
            <person name="Sicheritz-Ponten T."/>
            <person name="De Bellis G."/>
            <person name="Visca P."/>
            <person name="Cassone A."/>
            <person name="Carattoli A."/>
        </authorList>
    </citation>
    <scope>NUCLEOTIDE SEQUENCE [LARGE SCALE GENOMIC DNA]</scope>
    <source>
        <strain>ACICU</strain>
    </source>
</reference>
<dbReference type="EMBL" id="CP000863">
    <property type="protein sequence ID" value="ACC58586.1"/>
    <property type="molecule type" value="Genomic_DNA"/>
</dbReference>
<dbReference type="RefSeq" id="WP_001138119.1">
    <property type="nucleotide sequence ID" value="NZ_CP031380.1"/>
</dbReference>
<dbReference type="SMR" id="B2HZL8"/>
<dbReference type="GeneID" id="97425203"/>
<dbReference type="KEGG" id="abc:ACICU_03276"/>
<dbReference type="HOGENOM" id="CLU_144911_0_1_6"/>
<dbReference type="Proteomes" id="UP000008839">
    <property type="component" value="Chromosome"/>
</dbReference>
<dbReference type="GO" id="GO:0005737">
    <property type="term" value="C:cytoplasm"/>
    <property type="evidence" value="ECO:0007669"/>
    <property type="project" value="UniProtKB-ARBA"/>
</dbReference>
<dbReference type="GO" id="GO:0015935">
    <property type="term" value="C:small ribosomal subunit"/>
    <property type="evidence" value="ECO:0007669"/>
    <property type="project" value="InterPro"/>
</dbReference>
<dbReference type="GO" id="GO:0019843">
    <property type="term" value="F:rRNA binding"/>
    <property type="evidence" value="ECO:0007669"/>
    <property type="project" value="UniProtKB-UniRule"/>
</dbReference>
<dbReference type="GO" id="GO:0003735">
    <property type="term" value="F:structural constituent of ribosome"/>
    <property type="evidence" value="ECO:0007669"/>
    <property type="project" value="InterPro"/>
</dbReference>
<dbReference type="GO" id="GO:0000028">
    <property type="term" value="P:ribosomal small subunit assembly"/>
    <property type="evidence" value="ECO:0007669"/>
    <property type="project" value="TreeGrafter"/>
</dbReference>
<dbReference type="GO" id="GO:0006412">
    <property type="term" value="P:translation"/>
    <property type="evidence" value="ECO:0007669"/>
    <property type="project" value="UniProtKB-UniRule"/>
</dbReference>
<dbReference type="FunFam" id="3.30.860.10:FF:000001">
    <property type="entry name" value="30S ribosomal protein S19"/>
    <property type="match status" value="1"/>
</dbReference>
<dbReference type="Gene3D" id="3.30.860.10">
    <property type="entry name" value="30s Ribosomal Protein S19, Chain A"/>
    <property type="match status" value="1"/>
</dbReference>
<dbReference type="HAMAP" id="MF_00531">
    <property type="entry name" value="Ribosomal_uS19"/>
    <property type="match status" value="1"/>
</dbReference>
<dbReference type="InterPro" id="IPR002222">
    <property type="entry name" value="Ribosomal_uS19"/>
</dbReference>
<dbReference type="InterPro" id="IPR005732">
    <property type="entry name" value="Ribosomal_uS19_bac-type"/>
</dbReference>
<dbReference type="InterPro" id="IPR020934">
    <property type="entry name" value="Ribosomal_uS19_CS"/>
</dbReference>
<dbReference type="InterPro" id="IPR023575">
    <property type="entry name" value="Ribosomal_uS19_SF"/>
</dbReference>
<dbReference type="NCBIfam" id="TIGR01050">
    <property type="entry name" value="rpsS_bact"/>
    <property type="match status" value="1"/>
</dbReference>
<dbReference type="PANTHER" id="PTHR11880">
    <property type="entry name" value="RIBOSOMAL PROTEIN S19P FAMILY MEMBER"/>
    <property type="match status" value="1"/>
</dbReference>
<dbReference type="PANTHER" id="PTHR11880:SF8">
    <property type="entry name" value="SMALL RIBOSOMAL SUBUNIT PROTEIN US19M"/>
    <property type="match status" value="1"/>
</dbReference>
<dbReference type="Pfam" id="PF00203">
    <property type="entry name" value="Ribosomal_S19"/>
    <property type="match status" value="1"/>
</dbReference>
<dbReference type="PIRSF" id="PIRSF002144">
    <property type="entry name" value="Ribosomal_S19"/>
    <property type="match status" value="1"/>
</dbReference>
<dbReference type="PRINTS" id="PR00975">
    <property type="entry name" value="RIBOSOMALS19"/>
</dbReference>
<dbReference type="SUPFAM" id="SSF54570">
    <property type="entry name" value="Ribosomal protein S19"/>
    <property type="match status" value="1"/>
</dbReference>
<dbReference type="PROSITE" id="PS00323">
    <property type="entry name" value="RIBOSOMAL_S19"/>
    <property type="match status" value="1"/>
</dbReference>
<feature type="chain" id="PRO_1000127914" description="Small ribosomal subunit protein uS19">
    <location>
        <begin position="1"/>
        <end position="91"/>
    </location>
</feature>
<comment type="function">
    <text evidence="1">Protein S19 forms a complex with S13 that binds strongly to the 16S ribosomal RNA.</text>
</comment>
<comment type="similarity">
    <text evidence="1">Belongs to the universal ribosomal protein uS19 family.</text>
</comment>
<evidence type="ECO:0000255" key="1">
    <source>
        <dbReference type="HAMAP-Rule" id="MF_00531"/>
    </source>
</evidence>
<evidence type="ECO:0000305" key="2"/>
<accession>B2HZL8</accession>
<protein>
    <recommendedName>
        <fullName evidence="1">Small ribosomal subunit protein uS19</fullName>
    </recommendedName>
    <alternativeName>
        <fullName evidence="2">30S ribosomal protein S19</fullName>
    </alternativeName>
</protein>